<dbReference type="EMBL" id="AK029008">
    <property type="protein sequence ID" value="BAC26238.1"/>
    <property type="molecule type" value="mRNA"/>
</dbReference>
<dbReference type="EMBL" id="AK148340">
    <property type="protein sequence ID" value="BAE28493.1"/>
    <property type="molecule type" value="mRNA"/>
</dbReference>
<dbReference type="EMBL" id="AK159800">
    <property type="protein sequence ID" value="BAE35380.1"/>
    <property type="molecule type" value="mRNA"/>
</dbReference>
<dbReference type="EMBL" id="AK167290">
    <property type="protein sequence ID" value="BAE39396.1"/>
    <property type="molecule type" value="mRNA"/>
</dbReference>
<dbReference type="EMBL" id="AL645531">
    <property type="status" value="NOT_ANNOTATED_CDS"/>
    <property type="molecule type" value="Genomic_DNA"/>
</dbReference>
<dbReference type="EMBL" id="CH466552">
    <property type="protein sequence ID" value="EDL30001.1"/>
    <property type="molecule type" value="Genomic_DNA"/>
</dbReference>
<dbReference type="EMBL" id="BC021467">
    <property type="protein sequence ID" value="AAH21467.1"/>
    <property type="status" value="ALT_INIT"/>
    <property type="molecule type" value="mRNA"/>
</dbReference>
<dbReference type="EMBL" id="BC066808">
    <property type="protein sequence ID" value="AAH66808.1"/>
    <property type="molecule type" value="mRNA"/>
</dbReference>
<dbReference type="EMBL" id="BC067411">
    <property type="protein sequence ID" value="AAH67411.1"/>
    <property type="molecule type" value="mRNA"/>
</dbReference>
<dbReference type="CCDS" id="CCDS51327.1"/>
<dbReference type="RefSeq" id="NP_663529.2">
    <property type="nucleotide sequence ID" value="NM_145554.2"/>
</dbReference>
<dbReference type="RefSeq" id="XP_006538486.1">
    <property type="nucleotide sequence ID" value="XM_006538423.3"/>
</dbReference>
<dbReference type="SMR" id="Q8C142"/>
<dbReference type="BioGRID" id="221366">
    <property type="interactions" value="3"/>
</dbReference>
<dbReference type="FunCoup" id="Q8C142">
    <property type="interactions" value="656"/>
</dbReference>
<dbReference type="STRING" id="10090.ENSMUSP00000036749"/>
<dbReference type="GlyGen" id="Q8C142">
    <property type="glycosylation" value="1 site, 1 N-linked glycan (1 site)"/>
</dbReference>
<dbReference type="iPTMnet" id="Q8C142"/>
<dbReference type="PhosphoSitePlus" id="Q8C142"/>
<dbReference type="jPOST" id="Q8C142"/>
<dbReference type="PaxDb" id="10090-ENSMUSP00000036749"/>
<dbReference type="PeptideAtlas" id="Q8C142"/>
<dbReference type="ProteomicsDB" id="282016"/>
<dbReference type="Pumba" id="Q8C142"/>
<dbReference type="Antibodypedia" id="30473">
    <property type="antibodies" value="568 antibodies from 34 providers"/>
</dbReference>
<dbReference type="Ensembl" id="ENSMUST00000037828.8">
    <property type="protein sequence ID" value="ENSMUSP00000036749.7"/>
    <property type="gene ID" value="ENSMUSG00000037295.8"/>
</dbReference>
<dbReference type="GeneID" id="100017"/>
<dbReference type="KEGG" id="mmu:100017"/>
<dbReference type="UCSC" id="uc012dmx.1">
    <property type="organism name" value="mouse"/>
</dbReference>
<dbReference type="AGR" id="MGI:2140175"/>
<dbReference type="CTD" id="26119"/>
<dbReference type="MGI" id="MGI:2140175">
    <property type="gene designation" value="Ldlrap1"/>
</dbReference>
<dbReference type="VEuPathDB" id="HostDB:ENSMUSG00000037295"/>
<dbReference type="eggNOG" id="KOG3536">
    <property type="taxonomic scope" value="Eukaryota"/>
</dbReference>
<dbReference type="GeneTree" id="ENSGT00940000157118"/>
<dbReference type="HOGENOM" id="CLU_078253_0_0_1"/>
<dbReference type="InParanoid" id="Q8C142"/>
<dbReference type="OMA" id="CTADKAH"/>
<dbReference type="OrthoDB" id="9999955at2759"/>
<dbReference type="PhylomeDB" id="Q8C142"/>
<dbReference type="TreeFam" id="TF314159"/>
<dbReference type="Reactome" id="R-MMU-8856825">
    <property type="pathway name" value="Cargo recognition for clathrin-mediated endocytosis"/>
</dbReference>
<dbReference type="Reactome" id="R-MMU-8856828">
    <property type="pathway name" value="Clathrin-mediated endocytosis"/>
</dbReference>
<dbReference type="Reactome" id="R-MMU-8964026">
    <property type="pathway name" value="Chylomicron clearance"/>
</dbReference>
<dbReference type="Reactome" id="R-MMU-8964038">
    <property type="pathway name" value="LDL clearance"/>
</dbReference>
<dbReference type="Reactome" id="R-MMU-9758890">
    <property type="pathway name" value="Transport of RCbl within the body"/>
</dbReference>
<dbReference type="BioGRID-ORCS" id="100017">
    <property type="hits" value="2 hits in 79 CRISPR screens"/>
</dbReference>
<dbReference type="ChiTaRS" id="Ldlrap1">
    <property type="organism name" value="mouse"/>
</dbReference>
<dbReference type="PRO" id="PR:Q8C142"/>
<dbReference type="Proteomes" id="UP000000589">
    <property type="component" value="Chromosome 4"/>
</dbReference>
<dbReference type="RNAct" id="Q8C142">
    <property type="molecule type" value="protein"/>
</dbReference>
<dbReference type="Bgee" id="ENSMUSG00000037295">
    <property type="expression patterns" value="Expressed in ear vesicle and 196 other cell types or tissues"/>
</dbReference>
<dbReference type="GO" id="GO:0009925">
    <property type="term" value="C:basal plasma membrane"/>
    <property type="evidence" value="ECO:0000250"/>
    <property type="project" value="UniProtKB"/>
</dbReference>
<dbReference type="GO" id="GO:0005737">
    <property type="term" value="C:cytoplasm"/>
    <property type="evidence" value="ECO:0000314"/>
    <property type="project" value="BHF-UCL"/>
</dbReference>
<dbReference type="GO" id="GO:0009898">
    <property type="term" value="C:cytoplasmic side of plasma membrane"/>
    <property type="evidence" value="ECO:0007669"/>
    <property type="project" value="Ensembl"/>
</dbReference>
<dbReference type="GO" id="GO:0005829">
    <property type="term" value="C:cytosol"/>
    <property type="evidence" value="ECO:0000250"/>
    <property type="project" value="UniProtKB"/>
</dbReference>
<dbReference type="GO" id="GO:0005769">
    <property type="term" value="C:early endosome"/>
    <property type="evidence" value="ECO:0000314"/>
    <property type="project" value="MGI"/>
</dbReference>
<dbReference type="GO" id="GO:0005883">
    <property type="term" value="C:neurofilament"/>
    <property type="evidence" value="ECO:0000314"/>
    <property type="project" value="BHF-UCL"/>
</dbReference>
<dbReference type="GO" id="GO:0055037">
    <property type="term" value="C:recycling endosome"/>
    <property type="evidence" value="ECO:0007669"/>
    <property type="project" value="Ensembl"/>
</dbReference>
<dbReference type="GO" id="GO:0001540">
    <property type="term" value="F:amyloid-beta binding"/>
    <property type="evidence" value="ECO:0000353"/>
    <property type="project" value="BHF-UCL"/>
</dbReference>
<dbReference type="GO" id="GO:0035650">
    <property type="term" value="F:AP-1 adaptor complex binding"/>
    <property type="evidence" value="ECO:0000250"/>
    <property type="project" value="UniProtKB"/>
</dbReference>
<dbReference type="GO" id="GO:0035612">
    <property type="term" value="F:AP-2 adaptor complex binding"/>
    <property type="evidence" value="ECO:0000250"/>
    <property type="project" value="UniProtKB"/>
</dbReference>
<dbReference type="GO" id="GO:0035615">
    <property type="term" value="F:clathrin adaptor activity"/>
    <property type="evidence" value="ECO:0007669"/>
    <property type="project" value="Ensembl"/>
</dbReference>
<dbReference type="GO" id="GO:0030276">
    <property type="term" value="F:clathrin binding"/>
    <property type="evidence" value="ECO:0000250"/>
    <property type="project" value="UniProtKB"/>
</dbReference>
<dbReference type="GO" id="GO:0050750">
    <property type="term" value="F:low-density lipoprotein particle receptor binding"/>
    <property type="evidence" value="ECO:0007669"/>
    <property type="project" value="Ensembl"/>
</dbReference>
<dbReference type="GO" id="GO:0005546">
    <property type="term" value="F:phosphatidylinositol-4,5-bisphosphate binding"/>
    <property type="evidence" value="ECO:0007669"/>
    <property type="project" value="Ensembl"/>
</dbReference>
<dbReference type="GO" id="GO:0001784">
    <property type="term" value="F:phosphotyrosine residue binding"/>
    <property type="evidence" value="ECO:0000250"/>
    <property type="project" value="UniProtKB"/>
</dbReference>
<dbReference type="GO" id="GO:0005102">
    <property type="term" value="F:signaling receptor binding"/>
    <property type="evidence" value="ECO:0000266"/>
    <property type="project" value="MGI"/>
</dbReference>
<dbReference type="GO" id="GO:0030159">
    <property type="term" value="F:signaling receptor complex adaptor activity"/>
    <property type="evidence" value="ECO:0007669"/>
    <property type="project" value="Ensembl"/>
</dbReference>
<dbReference type="GO" id="GO:0042982">
    <property type="term" value="P:amyloid precursor protein metabolic process"/>
    <property type="evidence" value="ECO:0007669"/>
    <property type="project" value="Ensembl"/>
</dbReference>
<dbReference type="GO" id="GO:0071345">
    <property type="term" value="P:cellular response to cytokine stimulus"/>
    <property type="evidence" value="ECO:0007669"/>
    <property type="project" value="Ensembl"/>
</dbReference>
<dbReference type="GO" id="GO:0042632">
    <property type="term" value="P:cholesterol homeostasis"/>
    <property type="evidence" value="ECO:0000315"/>
    <property type="project" value="MGI"/>
</dbReference>
<dbReference type="GO" id="GO:0008203">
    <property type="term" value="P:cholesterol metabolic process"/>
    <property type="evidence" value="ECO:0007669"/>
    <property type="project" value="UniProtKB-KW"/>
</dbReference>
<dbReference type="GO" id="GO:0034383">
    <property type="term" value="P:low-density lipoprotein particle clearance"/>
    <property type="evidence" value="ECO:0007669"/>
    <property type="project" value="Ensembl"/>
</dbReference>
<dbReference type="GO" id="GO:1905581">
    <property type="term" value="P:positive regulation of low-density lipoprotein particle clearance"/>
    <property type="evidence" value="ECO:0007669"/>
    <property type="project" value="Ensembl"/>
</dbReference>
<dbReference type="GO" id="GO:0048260">
    <property type="term" value="P:positive regulation of receptor-mediated endocytosis"/>
    <property type="evidence" value="ECO:0000250"/>
    <property type="project" value="UniProtKB"/>
</dbReference>
<dbReference type="GO" id="GO:1905602">
    <property type="term" value="P:positive regulation of receptor-mediated endocytosis involved in cholesterol transport"/>
    <property type="evidence" value="ECO:0007669"/>
    <property type="project" value="Ensembl"/>
</dbReference>
<dbReference type="GO" id="GO:1904707">
    <property type="term" value="P:positive regulation of vascular associated smooth muscle cell proliferation"/>
    <property type="evidence" value="ECO:0007669"/>
    <property type="project" value="Ensembl"/>
</dbReference>
<dbReference type="GO" id="GO:0031623">
    <property type="term" value="P:receptor internalization"/>
    <property type="evidence" value="ECO:0007669"/>
    <property type="project" value="Ensembl"/>
</dbReference>
<dbReference type="GO" id="GO:0090118">
    <property type="term" value="P:receptor-mediated endocytosis involved in cholesterol transport"/>
    <property type="evidence" value="ECO:0007669"/>
    <property type="project" value="Ensembl"/>
</dbReference>
<dbReference type="GO" id="GO:1903076">
    <property type="term" value="P:regulation of protein localization to plasma membrane"/>
    <property type="evidence" value="ECO:0007669"/>
    <property type="project" value="Ensembl"/>
</dbReference>
<dbReference type="CDD" id="cd13159">
    <property type="entry name" value="PTB_LDLRAP-mammal-like"/>
    <property type="match status" value="1"/>
</dbReference>
<dbReference type="FunFam" id="2.30.29.30:FF:000137">
    <property type="entry name" value="Low density lipoprotein receptor adapter protein 1"/>
    <property type="match status" value="1"/>
</dbReference>
<dbReference type="Gene3D" id="2.30.29.30">
    <property type="entry name" value="Pleckstrin-homology domain (PH domain)/Phosphotyrosine-binding domain (PTB)"/>
    <property type="match status" value="1"/>
</dbReference>
<dbReference type="InterPro" id="IPR051133">
    <property type="entry name" value="Adapter_Engulfment-Domain"/>
</dbReference>
<dbReference type="InterPro" id="IPR011993">
    <property type="entry name" value="PH-like_dom_sf"/>
</dbReference>
<dbReference type="InterPro" id="IPR006020">
    <property type="entry name" value="PTB/PI_dom"/>
</dbReference>
<dbReference type="PANTHER" id="PTHR11232:SF35">
    <property type="entry name" value="LOW DENSITY LIPOPROTEIN RECEPTOR ADAPTER PROTEIN 1"/>
    <property type="match status" value="1"/>
</dbReference>
<dbReference type="PANTHER" id="PTHR11232">
    <property type="entry name" value="PHOSPHOTYROSINE INTERACTION DOMAIN-CONTAINING FAMILY MEMBER"/>
    <property type="match status" value="1"/>
</dbReference>
<dbReference type="Pfam" id="PF00640">
    <property type="entry name" value="PID"/>
    <property type="match status" value="1"/>
</dbReference>
<dbReference type="SMART" id="SM00462">
    <property type="entry name" value="PTB"/>
    <property type="match status" value="1"/>
</dbReference>
<dbReference type="SUPFAM" id="SSF50729">
    <property type="entry name" value="PH domain-like"/>
    <property type="match status" value="1"/>
</dbReference>
<dbReference type="PROSITE" id="PS01179">
    <property type="entry name" value="PID"/>
    <property type="match status" value="1"/>
</dbReference>
<gene>
    <name evidence="10" type="primary">Ldlrap1</name>
    <name evidence="7" type="synonym">Arh</name>
</gene>
<proteinExistence type="evidence at protein level"/>
<evidence type="ECO:0000250" key="1">
    <source>
        <dbReference type="UniProtKB" id="D3ZAR1"/>
    </source>
</evidence>
<evidence type="ECO:0000250" key="2">
    <source>
        <dbReference type="UniProtKB" id="Q5SW96"/>
    </source>
</evidence>
<evidence type="ECO:0000255" key="3">
    <source>
        <dbReference type="PROSITE-ProRule" id="PRU00148"/>
    </source>
</evidence>
<evidence type="ECO:0000256" key="4">
    <source>
        <dbReference type="SAM" id="MobiDB-lite"/>
    </source>
</evidence>
<evidence type="ECO:0000269" key="5">
    <source>
    </source>
</evidence>
<evidence type="ECO:0000269" key="6">
    <source>
    </source>
</evidence>
<evidence type="ECO:0000303" key="7">
    <source>
    </source>
</evidence>
<evidence type="ECO:0000305" key="8"/>
<evidence type="ECO:0000305" key="9">
    <source>
    </source>
</evidence>
<evidence type="ECO:0000312" key="10">
    <source>
        <dbReference type="MGI" id="MGI:2140175"/>
    </source>
</evidence>
<evidence type="ECO:0007744" key="11">
    <source>
    </source>
</evidence>
<feature type="chain" id="PRO_0000064676" description="Low density lipoprotein receptor adapter protein 1">
    <location>
        <begin position="1"/>
        <end position="308"/>
    </location>
</feature>
<feature type="domain" description="PID" evidence="3">
    <location>
        <begin position="41"/>
        <end position="195"/>
    </location>
</feature>
<feature type="region of interest" description="Disordered" evidence="4">
    <location>
        <begin position="179"/>
        <end position="201"/>
    </location>
</feature>
<feature type="region of interest" description="AP-2 complex binding" evidence="2">
    <location>
        <begin position="248"/>
        <end position="275"/>
    </location>
</feature>
<feature type="region of interest" description="Disordered" evidence="4">
    <location>
        <begin position="288"/>
        <end position="308"/>
    </location>
</feature>
<feature type="short sequence motif" description="Clathrin box" evidence="2">
    <location>
        <begin position="211"/>
        <end position="215"/>
    </location>
</feature>
<feature type="short sequence motif" description="[DE]-X(1,2)-F-X-X-[FL]-X-X-X-R motif" evidence="2">
    <location>
        <begin position="256"/>
        <end position="265"/>
    </location>
</feature>
<feature type="modified residue" description="N-acetylmethionine" evidence="2">
    <location>
        <position position="1"/>
    </location>
</feature>
<feature type="modified residue" description="Phosphoserine" evidence="2">
    <location>
        <position position="14"/>
    </location>
</feature>
<feature type="modified residue" description="Phosphoserine" evidence="1">
    <location>
        <position position="198"/>
    </location>
</feature>
<feature type="modified residue" description="Phosphoserine" evidence="11">
    <location>
        <position position="201"/>
    </location>
</feature>
<feature type="sequence conflict" description="In Ref. 1; BAC26238." evidence="8" ref="1">
    <original>R</original>
    <variation>K</variation>
    <location>
        <position position="260"/>
    </location>
</feature>
<feature type="sequence conflict" description="In Ref. 4; AAH66808/AAH67411." evidence="8" ref="4">
    <original>S</original>
    <variation>G</variation>
    <location>
        <position position="296"/>
    </location>
</feature>
<reference key="1">
    <citation type="journal article" date="2005" name="Science">
        <title>The transcriptional landscape of the mammalian genome.</title>
        <authorList>
            <person name="Carninci P."/>
            <person name="Kasukawa T."/>
            <person name="Katayama S."/>
            <person name="Gough J."/>
            <person name="Frith M.C."/>
            <person name="Maeda N."/>
            <person name="Oyama R."/>
            <person name="Ravasi T."/>
            <person name="Lenhard B."/>
            <person name="Wells C."/>
            <person name="Kodzius R."/>
            <person name="Shimokawa K."/>
            <person name="Bajic V.B."/>
            <person name="Brenner S.E."/>
            <person name="Batalov S."/>
            <person name="Forrest A.R."/>
            <person name="Zavolan M."/>
            <person name="Davis M.J."/>
            <person name="Wilming L.G."/>
            <person name="Aidinis V."/>
            <person name="Allen J.E."/>
            <person name="Ambesi-Impiombato A."/>
            <person name="Apweiler R."/>
            <person name="Aturaliya R.N."/>
            <person name="Bailey T.L."/>
            <person name="Bansal M."/>
            <person name="Baxter L."/>
            <person name="Beisel K.W."/>
            <person name="Bersano T."/>
            <person name="Bono H."/>
            <person name="Chalk A.M."/>
            <person name="Chiu K.P."/>
            <person name="Choudhary V."/>
            <person name="Christoffels A."/>
            <person name="Clutterbuck D.R."/>
            <person name="Crowe M.L."/>
            <person name="Dalla E."/>
            <person name="Dalrymple B.P."/>
            <person name="de Bono B."/>
            <person name="Della Gatta G."/>
            <person name="di Bernardo D."/>
            <person name="Down T."/>
            <person name="Engstrom P."/>
            <person name="Fagiolini M."/>
            <person name="Faulkner G."/>
            <person name="Fletcher C.F."/>
            <person name="Fukushima T."/>
            <person name="Furuno M."/>
            <person name="Futaki S."/>
            <person name="Gariboldi M."/>
            <person name="Georgii-Hemming P."/>
            <person name="Gingeras T.R."/>
            <person name="Gojobori T."/>
            <person name="Green R.E."/>
            <person name="Gustincich S."/>
            <person name="Harbers M."/>
            <person name="Hayashi Y."/>
            <person name="Hensch T.K."/>
            <person name="Hirokawa N."/>
            <person name="Hill D."/>
            <person name="Huminiecki L."/>
            <person name="Iacono M."/>
            <person name="Ikeo K."/>
            <person name="Iwama A."/>
            <person name="Ishikawa T."/>
            <person name="Jakt M."/>
            <person name="Kanapin A."/>
            <person name="Katoh M."/>
            <person name="Kawasawa Y."/>
            <person name="Kelso J."/>
            <person name="Kitamura H."/>
            <person name="Kitano H."/>
            <person name="Kollias G."/>
            <person name="Krishnan S.P."/>
            <person name="Kruger A."/>
            <person name="Kummerfeld S.K."/>
            <person name="Kurochkin I.V."/>
            <person name="Lareau L.F."/>
            <person name="Lazarevic D."/>
            <person name="Lipovich L."/>
            <person name="Liu J."/>
            <person name="Liuni S."/>
            <person name="McWilliam S."/>
            <person name="Madan Babu M."/>
            <person name="Madera M."/>
            <person name="Marchionni L."/>
            <person name="Matsuda H."/>
            <person name="Matsuzawa S."/>
            <person name="Miki H."/>
            <person name="Mignone F."/>
            <person name="Miyake S."/>
            <person name="Morris K."/>
            <person name="Mottagui-Tabar S."/>
            <person name="Mulder N."/>
            <person name="Nakano N."/>
            <person name="Nakauchi H."/>
            <person name="Ng P."/>
            <person name="Nilsson R."/>
            <person name="Nishiguchi S."/>
            <person name="Nishikawa S."/>
            <person name="Nori F."/>
            <person name="Ohara O."/>
            <person name="Okazaki Y."/>
            <person name="Orlando V."/>
            <person name="Pang K.C."/>
            <person name="Pavan W.J."/>
            <person name="Pavesi G."/>
            <person name="Pesole G."/>
            <person name="Petrovsky N."/>
            <person name="Piazza S."/>
            <person name="Reed J."/>
            <person name="Reid J.F."/>
            <person name="Ring B.Z."/>
            <person name="Ringwald M."/>
            <person name="Rost B."/>
            <person name="Ruan Y."/>
            <person name="Salzberg S.L."/>
            <person name="Sandelin A."/>
            <person name="Schneider C."/>
            <person name="Schoenbach C."/>
            <person name="Sekiguchi K."/>
            <person name="Semple C.A."/>
            <person name="Seno S."/>
            <person name="Sessa L."/>
            <person name="Sheng Y."/>
            <person name="Shibata Y."/>
            <person name="Shimada H."/>
            <person name="Shimada K."/>
            <person name="Silva D."/>
            <person name="Sinclair B."/>
            <person name="Sperling S."/>
            <person name="Stupka E."/>
            <person name="Sugiura K."/>
            <person name="Sultana R."/>
            <person name="Takenaka Y."/>
            <person name="Taki K."/>
            <person name="Tammoja K."/>
            <person name="Tan S.L."/>
            <person name="Tang S."/>
            <person name="Taylor M.S."/>
            <person name="Tegner J."/>
            <person name="Teichmann S.A."/>
            <person name="Ueda H.R."/>
            <person name="van Nimwegen E."/>
            <person name="Verardo R."/>
            <person name="Wei C.L."/>
            <person name="Yagi K."/>
            <person name="Yamanishi H."/>
            <person name="Zabarovsky E."/>
            <person name="Zhu S."/>
            <person name="Zimmer A."/>
            <person name="Hide W."/>
            <person name="Bult C."/>
            <person name="Grimmond S.M."/>
            <person name="Teasdale R.D."/>
            <person name="Liu E.T."/>
            <person name="Brusic V."/>
            <person name="Quackenbush J."/>
            <person name="Wahlestedt C."/>
            <person name="Mattick J.S."/>
            <person name="Hume D.A."/>
            <person name="Kai C."/>
            <person name="Sasaki D."/>
            <person name="Tomaru Y."/>
            <person name="Fukuda S."/>
            <person name="Kanamori-Katayama M."/>
            <person name="Suzuki M."/>
            <person name="Aoki J."/>
            <person name="Arakawa T."/>
            <person name="Iida J."/>
            <person name="Imamura K."/>
            <person name="Itoh M."/>
            <person name="Kato T."/>
            <person name="Kawaji H."/>
            <person name="Kawagashira N."/>
            <person name="Kawashima T."/>
            <person name="Kojima M."/>
            <person name="Kondo S."/>
            <person name="Konno H."/>
            <person name="Nakano K."/>
            <person name="Ninomiya N."/>
            <person name="Nishio T."/>
            <person name="Okada M."/>
            <person name="Plessy C."/>
            <person name="Shibata K."/>
            <person name="Shiraki T."/>
            <person name="Suzuki S."/>
            <person name="Tagami M."/>
            <person name="Waki K."/>
            <person name="Watahiki A."/>
            <person name="Okamura-Oho Y."/>
            <person name="Suzuki H."/>
            <person name="Kawai J."/>
            <person name="Hayashizaki Y."/>
        </authorList>
    </citation>
    <scope>NUCLEOTIDE SEQUENCE [LARGE SCALE MRNA]</scope>
    <source>
        <strain>C57BL/6J</strain>
        <tissue>Skin</tissue>
    </source>
</reference>
<reference key="2">
    <citation type="journal article" date="2009" name="PLoS Biol.">
        <title>Lineage-specific biology revealed by a finished genome assembly of the mouse.</title>
        <authorList>
            <person name="Church D.M."/>
            <person name="Goodstadt L."/>
            <person name="Hillier L.W."/>
            <person name="Zody M.C."/>
            <person name="Goldstein S."/>
            <person name="She X."/>
            <person name="Bult C.J."/>
            <person name="Agarwala R."/>
            <person name="Cherry J.L."/>
            <person name="DiCuccio M."/>
            <person name="Hlavina W."/>
            <person name="Kapustin Y."/>
            <person name="Meric P."/>
            <person name="Maglott D."/>
            <person name="Birtle Z."/>
            <person name="Marques A.C."/>
            <person name="Graves T."/>
            <person name="Zhou S."/>
            <person name="Teague B."/>
            <person name="Potamousis K."/>
            <person name="Churas C."/>
            <person name="Place M."/>
            <person name="Herschleb J."/>
            <person name="Runnheim R."/>
            <person name="Forrest D."/>
            <person name="Amos-Landgraf J."/>
            <person name="Schwartz D.C."/>
            <person name="Cheng Z."/>
            <person name="Lindblad-Toh K."/>
            <person name="Eichler E.E."/>
            <person name="Ponting C.P."/>
        </authorList>
    </citation>
    <scope>NUCLEOTIDE SEQUENCE [LARGE SCALE GENOMIC DNA]</scope>
    <source>
        <strain>C57BL/6J</strain>
    </source>
</reference>
<reference key="3">
    <citation type="submission" date="2005-09" db="EMBL/GenBank/DDBJ databases">
        <authorList>
            <person name="Mural R.J."/>
            <person name="Adams M.D."/>
            <person name="Myers E.W."/>
            <person name="Smith H.O."/>
            <person name="Venter J.C."/>
        </authorList>
    </citation>
    <scope>NUCLEOTIDE SEQUENCE [LARGE SCALE GENOMIC DNA]</scope>
</reference>
<reference key="4">
    <citation type="journal article" date="2004" name="Genome Res.">
        <title>The status, quality, and expansion of the NIH full-length cDNA project: the Mammalian Gene Collection (MGC).</title>
        <authorList>
            <consortium name="The MGC Project Team"/>
        </authorList>
    </citation>
    <scope>NUCLEOTIDE SEQUENCE [LARGE SCALE MRNA]</scope>
    <source>
        <strain>C3H/He</strain>
        <strain>CD-1</strain>
        <tissue>Mammary gland</tissue>
        <tissue>Neural stem cell</tissue>
        <tissue>Osteoblast</tissue>
    </source>
</reference>
<reference key="5">
    <citation type="journal article" date="2003" name="J. Biol. Chem.">
        <title>Normal sorting but defective endocytosis of the low density lipoprotein receptor in mice with autosomal recessive hypercholesterolemia.</title>
        <authorList>
            <person name="Jones C."/>
            <person name="Hammer R.E."/>
            <person name="Li W.-P."/>
            <person name="Cohen J.C."/>
            <person name="Hobbs H.H."/>
            <person name="Herz J."/>
        </authorList>
    </citation>
    <scope>FUNCTION</scope>
    <scope>INTERACTION WITH LDLR AND VLDLR</scope>
</reference>
<reference key="6">
    <citation type="journal article" date="2004" name="J. Biol. Chem.">
        <title>The modular adaptor protein ARH is required for low density lipoprotein (LDL) binding and internalization but not for LDL receptor clustering in coated pits.</title>
        <authorList>
            <person name="Michaely P."/>
            <person name="Li W.-P."/>
            <person name="Anderson R.G.W."/>
            <person name="Cohen J.C."/>
            <person name="Hobbs H.H."/>
        </authorList>
    </citation>
    <scope>FUNCTION</scope>
    <scope>SUBCELLULAR LOCATION</scope>
    <scope>DISRUPTION PHENOTYPE</scope>
</reference>
<reference key="7">
    <citation type="journal article" date="2010" name="Cell">
        <title>A tissue-specific atlas of mouse protein phosphorylation and expression.</title>
        <authorList>
            <person name="Huttlin E.L."/>
            <person name="Jedrychowski M.P."/>
            <person name="Elias J.E."/>
            <person name="Goswami T."/>
            <person name="Rad R."/>
            <person name="Beausoleil S.A."/>
            <person name="Villen J."/>
            <person name="Haas W."/>
            <person name="Sowa M.E."/>
            <person name="Gygi S.P."/>
        </authorList>
    </citation>
    <scope>PHOSPHORYLATION [LARGE SCALE ANALYSIS] AT SER-201</scope>
    <scope>IDENTIFICATION BY MASS SPECTROMETRY [LARGE SCALE ANALYSIS]</scope>
    <source>
        <tissue>Brown adipose tissue</tissue>
        <tissue>Kidney</tissue>
        <tissue>Liver</tissue>
        <tissue>Lung</tissue>
        <tissue>Spleen</tissue>
    </source>
</reference>
<accession>Q8C142</accession>
<accession>Q3TW86</accession>
<accession>Q6NWV6</accession>
<accession>Q8VDQ0</accession>
<sequence length="308" mass="33975">MDALKSAGRALIRSPSLAKQSWAGGRHRKLPENWTDTRETLLEGMVFSLKYLGMTLVERPKGEELSAAAVKRIVATAKASGKKLQKVTLKVSPRGIILTDSLTSQLIENVSIYRISYCTADKMHDKVFAYIAQSQQNESLECHAFLCTKRKVAQAVTLTVAQAFKVAFEFWQVSKEEKEKREKANQEGGDVPGTRRDSTPSLKTLVATGNLLDLEEVAKAPLSTVSANTNNVDETPRPQVLGNNSVVWELDDGLDEAFSRLAQSRTNPQVLDTGLSAQDIHYAQCLSPTDWDKPDSSGIDQDDDVFTF</sequence>
<name>ARH_MOUSE</name>
<organism>
    <name type="scientific">Mus musculus</name>
    <name type="common">Mouse</name>
    <dbReference type="NCBI Taxonomy" id="10090"/>
    <lineage>
        <taxon>Eukaryota</taxon>
        <taxon>Metazoa</taxon>
        <taxon>Chordata</taxon>
        <taxon>Craniata</taxon>
        <taxon>Vertebrata</taxon>
        <taxon>Euteleostomi</taxon>
        <taxon>Mammalia</taxon>
        <taxon>Eutheria</taxon>
        <taxon>Euarchontoglires</taxon>
        <taxon>Glires</taxon>
        <taxon>Rodentia</taxon>
        <taxon>Myomorpha</taxon>
        <taxon>Muroidea</taxon>
        <taxon>Muridae</taxon>
        <taxon>Murinae</taxon>
        <taxon>Mus</taxon>
        <taxon>Mus</taxon>
    </lineage>
</organism>
<keyword id="KW-0007">Acetylation</keyword>
<keyword id="KW-0065">Atherosclerosis</keyword>
<keyword id="KW-0153">Cholesterol metabolism</keyword>
<keyword id="KW-0963">Cytoplasm</keyword>
<keyword id="KW-0254">Endocytosis</keyword>
<keyword id="KW-0380">Hyperlipidemia</keyword>
<keyword id="KW-0443">Lipid metabolism</keyword>
<keyword id="KW-0597">Phosphoprotein</keyword>
<keyword id="KW-1185">Reference proteome</keyword>
<keyword id="KW-0753">Steroid metabolism</keyword>
<keyword id="KW-1207">Sterol metabolism</keyword>
<comment type="function">
    <text evidence="1 5 6">Adapter protein (clathrin-associated sorting protein (CLASP)) required for efficient endocytosis of the LDL receptor (LDLR) in polarized cells such as hepatocytes and lymphocytes, but not in non-polarized cells (fibroblasts). May be required for LDL binding and internalization but not for receptor clustering in coated pits. May facilitate the endocytosis of LDLR and LDLR-LDL complexes from coated pits by stabilizing the interaction between the receptor and the structural components of the pits. May also be involved in the internalization of other LDLR family members. Binds to phosphoinositides, which regulate clathrin bud assembly at the cell surface. Required for trafficking of LRP2 to the endocytic recycling compartment which is necessary for LRP2 proteolysis, releasing a tail fragment which translocates to the nucleus and mediates transcriptional repression (By similarity).</text>
</comment>
<comment type="subunit">
    <text evidence="1 2 5">Interacts (via PID domain) with LDLR (via NPXY motif). Binds to soluble clathrin trimers. Interacts with AP2B1; the interaction mediates the association with the AP-2 complex (By similarity). Interacts with VLDLR (PubMed:12746448). Interacts with LRP2 (By similarity).</text>
</comment>
<comment type="subcellular location">
    <subcellularLocation>
        <location evidence="6">Cytoplasm</location>
    </subcellularLocation>
</comment>
<comment type="domain">
    <text evidence="2">The [DE]-X(1,2)-F-X-X-[FL]-X-X-X-R motif mediates interaction the AP-2 complex subunit AP2B1.</text>
</comment>
<comment type="domain">
    <text evidence="1">The PID domain mediates interaction with the NPXY internalization motif of LDLR.</text>
</comment>
<comment type="disruption phenotype">
    <text evidence="6">Mice are extremely sensitive to cholesterol intake. LDLR are expressed at normal levels, but are sequestered at the hepatocyte surface. LDL internalization defect is caused by the inability of the LDLR to enter the endocytic cycle.</text>
</comment>
<comment type="sequence caution" evidence="8">
    <conflict type="erroneous initiation">
        <sequence resource="EMBL-CDS" id="AAH21467"/>
    </conflict>
    <text>Truncated N-terminus.</text>
</comment>
<protein>
    <recommendedName>
        <fullName evidence="8">Low density lipoprotein receptor adapter protein 1</fullName>
    </recommendedName>
    <alternativeName>
        <fullName evidence="9">Autosomal recessive hypercholesterolemia protein homolog</fullName>
    </alternativeName>
</protein>